<gene>
    <name type="primary">Slc33a1</name>
    <name type="synonym">Acatn</name>
</gene>
<proteinExistence type="evidence at transcript level"/>
<sequence length="550" mass="61101">MSPTISHKDNSRQRRSGMFGHALDMKSGPLPPGGWDDNHQDSVGGEGDREVLLGDVGPGDFPKAKRSYRAELSSILLLLFLYVLQGIPLGLAGSIPLILQSKNVSYTDQAFFSFVFWPFSLKLLWAPLVDAVYFKNFGRRKSWLVPTQYILGIFMIYLSTQVDRLLGNIDGRTPDVVALTVTFFLFEFLAATQDIAVDGWALTMLSRENVGYASTCNSVGQTAGYFLGNVLFLALESADFCNKYLRFQPQPRGIVTLSDFLFFWGTVFLITTTLVALLKKETREASVVKEETQGITDTYKLLFSIIKMPAVLAFCLLILTSKIGFSAADAVTGLKLVEEGVPKEHLALLAVPMVPLQIILPLLISKYTAGPQPLNIFYKAMPYRLLLGLEYALLVWWTPKVEHQGGFPIYYYIIVLLSYALHQVTLYSMYVSIMAFNAKVSDPLIGGTYMTLLNTVSNLGGNWPSTVALWLVDPLTVKECVGASNQNCRTPEAIELCKKLGGSCVTALDGYYVESIVCVLIGFGWWFFLGPKFKKLQDEGPSSWKCKRTN</sequence>
<accession>Q6AYY8</accession>
<accession>Q9JM68</accession>
<dbReference type="EMBL" id="AB039326">
    <property type="protein sequence ID" value="BAA95446.1"/>
    <property type="molecule type" value="Genomic_DNA"/>
</dbReference>
<dbReference type="EMBL" id="BC078832">
    <property type="protein sequence ID" value="AAH78832.1"/>
    <property type="molecule type" value="mRNA"/>
</dbReference>
<dbReference type="RefSeq" id="NP_071588.2">
    <property type="nucleotide sequence ID" value="NM_022252.2"/>
</dbReference>
<dbReference type="RefSeq" id="XP_008759280.1">
    <property type="nucleotide sequence ID" value="XM_008761058.2"/>
</dbReference>
<dbReference type="FunCoup" id="Q6AYY8">
    <property type="interactions" value="1787"/>
</dbReference>
<dbReference type="STRING" id="10116.ENSRNOP00000013392"/>
<dbReference type="GlyCosmos" id="Q6AYY8">
    <property type="glycosylation" value="1 site, No reported glycans"/>
</dbReference>
<dbReference type="GlyGen" id="Q6AYY8">
    <property type="glycosylation" value="1 site"/>
</dbReference>
<dbReference type="iPTMnet" id="Q6AYY8"/>
<dbReference type="PhosphoSitePlus" id="Q6AYY8"/>
<dbReference type="PaxDb" id="10116-ENSRNOP00000013392"/>
<dbReference type="Ensembl" id="ENSRNOT00000013392.6">
    <property type="protein sequence ID" value="ENSRNOP00000013392.3"/>
    <property type="gene ID" value="ENSRNOG00000010023.7"/>
</dbReference>
<dbReference type="GeneID" id="64018"/>
<dbReference type="KEGG" id="rno:64018"/>
<dbReference type="UCSC" id="RGD:620653">
    <property type="organism name" value="rat"/>
</dbReference>
<dbReference type="AGR" id="RGD:620653"/>
<dbReference type="CTD" id="9197"/>
<dbReference type="RGD" id="620653">
    <property type="gene designation" value="Slc33a1"/>
</dbReference>
<dbReference type="VEuPathDB" id="HostDB:ENSRNOG00000051151"/>
<dbReference type="eggNOG" id="KOG3574">
    <property type="taxonomic scope" value="Eukaryota"/>
</dbReference>
<dbReference type="GeneTree" id="ENSGT00940000154019"/>
<dbReference type="HOGENOM" id="CLU_020502_1_0_1"/>
<dbReference type="InParanoid" id="Q6AYY8"/>
<dbReference type="OMA" id="RRKSWIM"/>
<dbReference type="OrthoDB" id="6415790at2759"/>
<dbReference type="PhylomeDB" id="Q6AYY8"/>
<dbReference type="TreeFam" id="TF300008"/>
<dbReference type="Reactome" id="R-RNO-425397">
    <property type="pathway name" value="Transport of vitamins, nucleosides, and related molecules"/>
</dbReference>
<dbReference type="PRO" id="PR:Q6AYY8"/>
<dbReference type="Proteomes" id="UP000002494">
    <property type="component" value="Chromosome 2"/>
</dbReference>
<dbReference type="Bgee" id="ENSRNOG00000010023">
    <property type="expression patterns" value="Expressed in liver and 20 other cell types or tissues"/>
</dbReference>
<dbReference type="GO" id="GO:0005789">
    <property type="term" value="C:endoplasmic reticulum membrane"/>
    <property type="evidence" value="ECO:0000250"/>
    <property type="project" value="UniProtKB"/>
</dbReference>
<dbReference type="GO" id="GO:0008521">
    <property type="term" value="F:acetyl-CoA transmembrane transporter activity"/>
    <property type="evidence" value="ECO:0000250"/>
    <property type="project" value="UniProtKB"/>
</dbReference>
<dbReference type="GO" id="GO:0042803">
    <property type="term" value="F:protein homodimerization activity"/>
    <property type="evidence" value="ECO:0000266"/>
    <property type="project" value="RGD"/>
</dbReference>
<dbReference type="GO" id="GO:0035348">
    <property type="term" value="P:acetyl-CoA transmembrane transport"/>
    <property type="evidence" value="ECO:0000250"/>
    <property type="project" value="UniProtKB"/>
</dbReference>
<dbReference type="FunFam" id="1.20.1250.20:FF:000287">
    <property type="entry name" value="acetyl-coenzyme A transporter 1 isoform X1"/>
    <property type="match status" value="1"/>
</dbReference>
<dbReference type="Gene3D" id="1.20.1250.20">
    <property type="entry name" value="MFS general substrate transporter like domains"/>
    <property type="match status" value="1"/>
</dbReference>
<dbReference type="InterPro" id="IPR024371">
    <property type="entry name" value="AcetylCoA_trans_1-like"/>
</dbReference>
<dbReference type="InterPro" id="IPR004752">
    <property type="entry name" value="AmpG_permease/AT-1"/>
</dbReference>
<dbReference type="InterPro" id="IPR036259">
    <property type="entry name" value="MFS_trans_sf"/>
</dbReference>
<dbReference type="PANTHER" id="PTHR12778:SF9">
    <property type="entry name" value="ACETYL-COENZYME A TRANSPORTER 1"/>
    <property type="match status" value="1"/>
</dbReference>
<dbReference type="PANTHER" id="PTHR12778">
    <property type="entry name" value="SOLUTE CARRIER FAMILY 33 ACETYL-COA TRANSPORTER -RELATED"/>
    <property type="match status" value="1"/>
</dbReference>
<dbReference type="Pfam" id="PF13000">
    <property type="entry name" value="Acatn"/>
    <property type="match status" value="2"/>
</dbReference>
<dbReference type="SUPFAM" id="SSF103473">
    <property type="entry name" value="MFS general substrate transporter"/>
    <property type="match status" value="1"/>
</dbReference>
<protein>
    <recommendedName>
        <fullName>Acetyl-coenzyme A transporter 1</fullName>
        <shortName>AT-1</shortName>
        <shortName>Acetyl-CoA transporter 1</shortName>
    </recommendedName>
    <alternativeName>
        <fullName>Solute carrier family 33 member 1</fullName>
    </alternativeName>
</protein>
<organism>
    <name type="scientific">Rattus norvegicus</name>
    <name type="common">Rat</name>
    <dbReference type="NCBI Taxonomy" id="10116"/>
    <lineage>
        <taxon>Eukaryota</taxon>
        <taxon>Metazoa</taxon>
        <taxon>Chordata</taxon>
        <taxon>Craniata</taxon>
        <taxon>Vertebrata</taxon>
        <taxon>Euteleostomi</taxon>
        <taxon>Mammalia</taxon>
        <taxon>Eutheria</taxon>
        <taxon>Euarchontoglires</taxon>
        <taxon>Glires</taxon>
        <taxon>Rodentia</taxon>
        <taxon>Myomorpha</taxon>
        <taxon>Muroidea</taxon>
        <taxon>Muridae</taxon>
        <taxon>Murinae</taxon>
        <taxon>Rattus</taxon>
    </lineage>
</organism>
<feature type="chain" id="PRO_0000076167" description="Acetyl-coenzyme A transporter 1">
    <location>
        <begin position="1"/>
        <end position="550"/>
    </location>
</feature>
<feature type="topological domain" description="Cytoplasmic" evidence="3">
    <location>
        <begin position="1"/>
        <end position="74"/>
    </location>
</feature>
<feature type="transmembrane region" description="Helical" evidence="3">
    <location>
        <begin position="75"/>
        <end position="95"/>
    </location>
</feature>
<feature type="topological domain" description="Extracellular" evidence="3">
    <location>
        <begin position="96"/>
        <end position="113"/>
    </location>
</feature>
<feature type="transmembrane region" description="Helical" evidence="3">
    <location>
        <begin position="114"/>
        <end position="134"/>
    </location>
</feature>
<feature type="topological domain" description="Cytoplasmic" evidence="3">
    <location>
        <begin position="135"/>
        <end position="141"/>
    </location>
</feature>
<feature type="transmembrane region" description="Helical" evidence="3">
    <location>
        <begin position="142"/>
        <end position="162"/>
    </location>
</feature>
<feature type="topological domain" description="Extracellular" evidence="3">
    <location>
        <begin position="163"/>
        <end position="256"/>
    </location>
</feature>
<feature type="transmembrane region" description="Helical" evidence="3">
    <location>
        <begin position="257"/>
        <end position="277"/>
    </location>
</feature>
<feature type="topological domain" description="Cytoplasmic" evidence="3">
    <location>
        <begin position="278"/>
        <end position="300"/>
    </location>
</feature>
<feature type="transmembrane region" description="Helical" evidence="3">
    <location>
        <begin position="301"/>
        <end position="321"/>
    </location>
</feature>
<feature type="topological domain" description="Extracellular" evidence="3">
    <location>
        <begin position="322"/>
        <end position="344"/>
    </location>
</feature>
<feature type="transmembrane region" description="Helical" evidence="3">
    <location>
        <begin position="345"/>
        <end position="365"/>
    </location>
</feature>
<feature type="topological domain" description="Cytoplasmic" evidence="3">
    <location>
        <begin position="366"/>
        <end position="375"/>
    </location>
</feature>
<feature type="transmembrane region" description="Helical" evidence="3">
    <location>
        <begin position="376"/>
        <end position="396"/>
    </location>
</feature>
<feature type="topological domain" description="Extracellular" evidence="3">
    <location>
        <begin position="397"/>
        <end position="405"/>
    </location>
</feature>
<feature type="transmembrane region" description="Helical" evidence="3">
    <location>
        <begin position="406"/>
        <end position="426"/>
    </location>
</feature>
<feature type="topological domain" description="Cytoplasmic" evidence="3">
    <location>
        <begin position="427"/>
        <end position="509"/>
    </location>
</feature>
<feature type="transmembrane region" description="Helical" evidence="3">
    <location>
        <begin position="510"/>
        <end position="530"/>
    </location>
</feature>
<feature type="topological domain" description="Extracellular" evidence="3">
    <location>
        <begin position="531"/>
        <end position="550"/>
    </location>
</feature>
<feature type="modified residue" description="Phosphoserine" evidence="2">
    <location>
        <position position="42"/>
    </location>
</feature>
<feature type="glycosylation site" description="N-linked (GlcNAc...) asparagine" evidence="3">
    <location>
        <position position="103"/>
    </location>
</feature>
<feature type="sequence conflict" description="In Ref. 1; BAA95446." evidence="5" ref="1">
    <original>L</original>
    <variation>W</variation>
    <location>
        <position position="245"/>
    </location>
</feature>
<feature type="sequence conflict" description="In Ref. 1; BAA95446." evidence="5" ref="1">
    <original>T</original>
    <variation>N</variation>
    <location>
        <position position="549"/>
    </location>
</feature>
<reference key="1">
    <citation type="journal article" date="2000" name="Cytogenet. Cell Genet.">
        <title>cDNA cloning of putative rat acetyl-CoA transporter and its expression pattern in brain.</title>
        <authorList>
            <person name="Bora R.S."/>
            <person name="Ichikawa S."/>
            <person name="Kanamori A."/>
            <person name="Hirabayashi Y."/>
        </authorList>
    </citation>
    <scope>NUCLEOTIDE SEQUENCE [GENOMIC DNA]</scope>
    <scope>TISSUE SPECIFICITY</scope>
    <source>
        <strain>Wistar</strain>
        <tissue>Embryonic brain</tissue>
    </source>
</reference>
<reference key="2">
    <citation type="journal article" date="2004" name="Genome Res.">
        <title>The status, quality, and expansion of the NIH full-length cDNA project: the Mammalian Gene Collection (MGC).</title>
        <authorList>
            <consortium name="The MGC Project Team"/>
        </authorList>
    </citation>
    <scope>NUCLEOTIDE SEQUENCE [LARGE SCALE MRNA]</scope>
    <source>
        <tissue>Testis</tissue>
    </source>
</reference>
<name>ACATN_RAT</name>
<comment type="function">
    <text evidence="1">Acetyl-CoA transporter that mediates active acetyl-CoA import through the endoplasmic reticulum (ER) membrane into the ER lumen where specific ER-based acetyl-CoA:lysine acetyltransferases are responsible for the acetylation of ER-based protein substrates, such as BACE1. Necessary for O-acetylation of gangliosides.</text>
</comment>
<comment type="catalytic activity">
    <reaction evidence="1">
        <text>acetyl-CoA(in) = acetyl-CoA(out)</text>
        <dbReference type="Rhea" id="RHEA:75039"/>
        <dbReference type="ChEBI" id="CHEBI:57288"/>
    </reaction>
    <physiologicalReaction direction="left-to-right" evidence="1">
        <dbReference type="Rhea" id="RHEA:75040"/>
    </physiologicalReaction>
</comment>
<comment type="subunit">
    <text evidence="1">Homodimerizes.</text>
</comment>
<comment type="subcellular location">
    <subcellularLocation>
        <location evidence="1">Endoplasmic reticulum membrane</location>
        <topology evidence="3">Multi-pass membrane protein</topology>
    </subcellularLocation>
</comment>
<comment type="tissue specificity">
    <text evidence="4">Expressed in brain at all developmental stages. Detected in hippocampus, hypothalamus, cerebellum, cortex, olfactory bulb, and the ventral and dorsal anterior olfactory nucleus.</text>
</comment>
<comment type="similarity">
    <text evidence="5">Belongs to the SLC33A transporter family.</text>
</comment>
<keyword id="KW-0256">Endoplasmic reticulum</keyword>
<keyword id="KW-0325">Glycoprotein</keyword>
<keyword id="KW-0472">Membrane</keyword>
<keyword id="KW-0597">Phosphoprotein</keyword>
<keyword id="KW-1185">Reference proteome</keyword>
<keyword id="KW-0812">Transmembrane</keyword>
<keyword id="KW-1133">Transmembrane helix</keyword>
<keyword id="KW-0813">Transport</keyword>
<evidence type="ECO:0000250" key="1">
    <source>
        <dbReference type="UniProtKB" id="O00400"/>
    </source>
</evidence>
<evidence type="ECO:0000250" key="2">
    <source>
        <dbReference type="UniProtKB" id="Q99J27"/>
    </source>
</evidence>
<evidence type="ECO:0000255" key="3"/>
<evidence type="ECO:0000269" key="4">
    <source>
    </source>
</evidence>
<evidence type="ECO:0000305" key="5"/>